<organism>
    <name type="scientific">Shewanella putrefaciens (strain CN-32 / ATCC BAA-453)</name>
    <dbReference type="NCBI Taxonomy" id="319224"/>
    <lineage>
        <taxon>Bacteria</taxon>
        <taxon>Pseudomonadati</taxon>
        <taxon>Pseudomonadota</taxon>
        <taxon>Gammaproteobacteria</taxon>
        <taxon>Alteromonadales</taxon>
        <taxon>Shewanellaceae</taxon>
        <taxon>Shewanella</taxon>
    </lineage>
</organism>
<evidence type="ECO:0000255" key="1">
    <source>
        <dbReference type="HAMAP-Rule" id="MF_01619"/>
    </source>
</evidence>
<sequence>MDDNKRPLYLPFAGPAILEAPLINKGSAFSEEERIFFNLEGLVPYAIETIEEQASRAYDQFRSFNNDLDKHIYLRNIQDTNETLFYRLVQNNISEMMPIIYTPTVGLACERFSKNYRRNRGLFISYPNKDRIDDILNNSTRQKVKIIVVTDGERILGLGDQGIGGMGIPIGKLSLYTSCGGISPAYTLPITLDVGTDNPQLLEDPMYMGWRHPRIGGEEYAEFIEAFMQAVHVRWPDTLIQFEDFAQKNAMPILERYKDRYCCFNDDIQGTAAVAVGCLLAACKAAGTELNQQRIAFLGAGSAGCGIAEAIVAQMVSEGISDEQARTQVCMVDRWGLLLDNMPNLLPFQQKLAQKCANIQNWNNFSDNISLLDVVNNAKPTVLIGVSGVPGLFTEEIIRAMHSHCARPIIFPMSNPTSRVEATPKDILHWTSGQALVATGSPFEPVVVDGETYEIAQCNNSFIFPGIGLGVLASGARHVSDAMLMASSRALAECSPLAIDGTGPLLPKLEDIHAVSKHIAFAVGKVAVEQGLTLPMSDEILQQSIEGNFWKPEYRRYKRTSF</sequence>
<name>MAO1_SHEPC</name>
<proteinExistence type="inferred from homology"/>
<dbReference type="EC" id="1.1.1.38" evidence="1"/>
<dbReference type="EMBL" id="CP000681">
    <property type="protein sequence ID" value="ABP74514.1"/>
    <property type="molecule type" value="Genomic_DNA"/>
</dbReference>
<dbReference type="SMR" id="A4Y3I1"/>
<dbReference type="STRING" id="319224.Sputcn32_0784"/>
<dbReference type="KEGG" id="spc:Sputcn32_0784"/>
<dbReference type="eggNOG" id="COG0281">
    <property type="taxonomic scope" value="Bacteria"/>
</dbReference>
<dbReference type="HOGENOM" id="CLU_011405_5_2_6"/>
<dbReference type="GO" id="GO:0005829">
    <property type="term" value="C:cytosol"/>
    <property type="evidence" value="ECO:0007669"/>
    <property type="project" value="TreeGrafter"/>
</dbReference>
<dbReference type="GO" id="GO:0004471">
    <property type="term" value="F:malate dehydrogenase (decarboxylating) (NAD+) activity"/>
    <property type="evidence" value="ECO:0007669"/>
    <property type="project" value="UniProtKB-UniRule"/>
</dbReference>
<dbReference type="GO" id="GO:0046872">
    <property type="term" value="F:metal ion binding"/>
    <property type="evidence" value="ECO:0007669"/>
    <property type="project" value="UniProtKB-KW"/>
</dbReference>
<dbReference type="GO" id="GO:0051287">
    <property type="term" value="F:NAD binding"/>
    <property type="evidence" value="ECO:0007669"/>
    <property type="project" value="InterPro"/>
</dbReference>
<dbReference type="GO" id="GO:0008948">
    <property type="term" value="F:oxaloacetate decarboxylase activity"/>
    <property type="evidence" value="ECO:0007669"/>
    <property type="project" value="UniProtKB-UniRule"/>
</dbReference>
<dbReference type="GO" id="GO:0006108">
    <property type="term" value="P:malate metabolic process"/>
    <property type="evidence" value="ECO:0007669"/>
    <property type="project" value="TreeGrafter"/>
</dbReference>
<dbReference type="CDD" id="cd05312">
    <property type="entry name" value="NAD_bind_1_malic_enz"/>
    <property type="match status" value="1"/>
</dbReference>
<dbReference type="FunFam" id="3.40.50.10380:FF:000001">
    <property type="entry name" value="NAD-dependent malic enzyme"/>
    <property type="match status" value="1"/>
</dbReference>
<dbReference type="FunFam" id="3.40.50.720:FF:000055">
    <property type="entry name" value="NAD-dependent malic enzyme"/>
    <property type="match status" value="1"/>
</dbReference>
<dbReference type="Gene3D" id="3.40.50.10380">
    <property type="entry name" value="Malic enzyme, N-terminal domain"/>
    <property type="match status" value="1"/>
</dbReference>
<dbReference type="Gene3D" id="3.40.50.720">
    <property type="entry name" value="NAD(P)-binding Rossmann-like Domain"/>
    <property type="match status" value="1"/>
</dbReference>
<dbReference type="HAMAP" id="MF_01619">
    <property type="entry name" value="NAD_malic_enz"/>
    <property type="match status" value="1"/>
</dbReference>
<dbReference type="InterPro" id="IPR046346">
    <property type="entry name" value="Aminoacid_DH-like_N_sf"/>
</dbReference>
<dbReference type="InterPro" id="IPR015884">
    <property type="entry name" value="Malic_enzyme_CS"/>
</dbReference>
<dbReference type="InterPro" id="IPR012301">
    <property type="entry name" value="Malic_N_dom"/>
</dbReference>
<dbReference type="InterPro" id="IPR037062">
    <property type="entry name" value="Malic_N_dom_sf"/>
</dbReference>
<dbReference type="InterPro" id="IPR012302">
    <property type="entry name" value="Malic_NAD-bd"/>
</dbReference>
<dbReference type="InterPro" id="IPR001891">
    <property type="entry name" value="Malic_OxRdtase"/>
</dbReference>
<dbReference type="InterPro" id="IPR036291">
    <property type="entry name" value="NAD(P)-bd_dom_sf"/>
</dbReference>
<dbReference type="InterPro" id="IPR023667">
    <property type="entry name" value="NAD_malic_enz_proteobac"/>
</dbReference>
<dbReference type="NCBIfam" id="NF010052">
    <property type="entry name" value="PRK13529.1"/>
    <property type="match status" value="1"/>
</dbReference>
<dbReference type="PANTHER" id="PTHR23406">
    <property type="entry name" value="MALIC ENZYME-RELATED"/>
    <property type="match status" value="1"/>
</dbReference>
<dbReference type="PANTHER" id="PTHR23406:SF34">
    <property type="entry name" value="NAD-DEPENDENT MALIC ENZYME, MITOCHONDRIAL"/>
    <property type="match status" value="1"/>
</dbReference>
<dbReference type="Pfam" id="PF00390">
    <property type="entry name" value="malic"/>
    <property type="match status" value="1"/>
</dbReference>
<dbReference type="Pfam" id="PF03949">
    <property type="entry name" value="Malic_M"/>
    <property type="match status" value="1"/>
</dbReference>
<dbReference type="PIRSF" id="PIRSF000106">
    <property type="entry name" value="ME"/>
    <property type="match status" value="1"/>
</dbReference>
<dbReference type="PRINTS" id="PR00072">
    <property type="entry name" value="MALOXRDTASE"/>
</dbReference>
<dbReference type="SMART" id="SM01274">
    <property type="entry name" value="malic"/>
    <property type="match status" value="1"/>
</dbReference>
<dbReference type="SMART" id="SM00919">
    <property type="entry name" value="Malic_M"/>
    <property type="match status" value="1"/>
</dbReference>
<dbReference type="SUPFAM" id="SSF53223">
    <property type="entry name" value="Aminoacid dehydrogenase-like, N-terminal domain"/>
    <property type="match status" value="1"/>
</dbReference>
<dbReference type="SUPFAM" id="SSF51735">
    <property type="entry name" value="NAD(P)-binding Rossmann-fold domains"/>
    <property type="match status" value="1"/>
</dbReference>
<dbReference type="PROSITE" id="PS00331">
    <property type="entry name" value="MALIC_ENZYMES"/>
    <property type="match status" value="1"/>
</dbReference>
<feature type="chain" id="PRO_1000069544" description="NAD-dependent malic enzyme">
    <location>
        <begin position="1"/>
        <end position="562"/>
    </location>
</feature>
<feature type="active site" description="Proton donor" evidence="1">
    <location>
        <position position="101"/>
    </location>
</feature>
<feature type="active site" description="Proton acceptor" evidence="1">
    <location>
        <position position="172"/>
    </location>
</feature>
<feature type="binding site" evidence="1">
    <location>
        <position position="154"/>
    </location>
    <ligand>
        <name>NAD(+)</name>
        <dbReference type="ChEBI" id="CHEBI:57540"/>
    </ligand>
</feature>
<feature type="binding site" evidence="1">
    <location>
        <position position="243"/>
    </location>
    <ligand>
        <name>a divalent metal cation</name>
        <dbReference type="ChEBI" id="CHEBI:60240"/>
    </ligand>
</feature>
<feature type="binding site" evidence="1">
    <location>
        <position position="244"/>
    </location>
    <ligand>
        <name>a divalent metal cation</name>
        <dbReference type="ChEBI" id="CHEBI:60240"/>
    </ligand>
</feature>
<feature type="binding site" evidence="1">
    <location>
        <position position="267"/>
    </location>
    <ligand>
        <name>a divalent metal cation</name>
        <dbReference type="ChEBI" id="CHEBI:60240"/>
    </ligand>
</feature>
<feature type="binding site" evidence="1">
    <location>
        <position position="267"/>
    </location>
    <ligand>
        <name>NAD(+)</name>
        <dbReference type="ChEBI" id="CHEBI:57540"/>
    </ligand>
</feature>
<feature type="binding site" evidence="1">
    <location>
        <position position="415"/>
    </location>
    <ligand>
        <name>NAD(+)</name>
        <dbReference type="ChEBI" id="CHEBI:57540"/>
    </ligand>
</feature>
<feature type="site" description="Important for activity" evidence="1">
    <location>
        <position position="267"/>
    </location>
</feature>
<reference key="1">
    <citation type="submission" date="2007-04" db="EMBL/GenBank/DDBJ databases">
        <title>Complete sequence of Shewanella putrefaciens CN-32.</title>
        <authorList>
            <consortium name="US DOE Joint Genome Institute"/>
            <person name="Copeland A."/>
            <person name="Lucas S."/>
            <person name="Lapidus A."/>
            <person name="Barry K."/>
            <person name="Detter J.C."/>
            <person name="Glavina del Rio T."/>
            <person name="Hammon N."/>
            <person name="Israni S."/>
            <person name="Dalin E."/>
            <person name="Tice H."/>
            <person name="Pitluck S."/>
            <person name="Chain P."/>
            <person name="Malfatti S."/>
            <person name="Shin M."/>
            <person name="Vergez L."/>
            <person name="Schmutz J."/>
            <person name="Larimer F."/>
            <person name="Land M."/>
            <person name="Hauser L."/>
            <person name="Kyrpides N."/>
            <person name="Mikhailova N."/>
            <person name="Romine M.F."/>
            <person name="Fredrickson J."/>
            <person name="Tiedje J."/>
            <person name="Richardson P."/>
        </authorList>
    </citation>
    <scope>NUCLEOTIDE SEQUENCE [LARGE SCALE GENOMIC DNA]</scope>
    <source>
        <strain>CN-32 / ATCC BAA-453</strain>
    </source>
</reference>
<protein>
    <recommendedName>
        <fullName evidence="1">NAD-dependent malic enzyme</fullName>
        <shortName evidence="1">NAD-ME</shortName>
        <ecNumber evidence="1">1.1.1.38</ecNumber>
    </recommendedName>
</protein>
<gene>
    <name evidence="1" type="primary">maeA</name>
    <name type="ordered locus">Sputcn32_0784</name>
</gene>
<accession>A4Y3I1</accession>
<keyword id="KW-0479">Metal-binding</keyword>
<keyword id="KW-0520">NAD</keyword>
<keyword id="KW-0560">Oxidoreductase</keyword>
<comment type="catalytic activity">
    <reaction evidence="1">
        <text>(S)-malate + NAD(+) = pyruvate + CO2 + NADH</text>
        <dbReference type="Rhea" id="RHEA:12653"/>
        <dbReference type="ChEBI" id="CHEBI:15361"/>
        <dbReference type="ChEBI" id="CHEBI:15589"/>
        <dbReference type="ChEBI" id="CHEBI:16526"/>
        <dbReference type="ChEBI" id="CHEBI:57540"/>
        <dbReference type="ChEBI" id="CHEBI:57945"/>
        <dbReference type="EC" id="1.1.1.38"/>
    </reaction>
</comment>
<comment type="catalytic activity">
    <reaction evidence="1">
        <text>oxaloacetate + H(+) = pyruvate + CO2</text>
        <dbReference type="Rhea" id="RHEA:15641"/>
        <dbReference type="ChEBI" id="CHEBI:15361"/>
        <dbReference type="ChEBI" id="CHEBI:15378"/>
        <dbReference type="ChEBI" id="CHEBI:16452"/>
        <dbReference type="ChEBI" id="CHEBI:16526"/>
        <dbReference type="EC" id="1.1.1.38"/>
    </reaction>
</comment>
<comment type="cofactor">
    <cofactor evidence="1">
        <name>Mg(2+)</name>
        <dbReference type="ChEBI" id="CHEBI:18420"/>
    </cofactor>
    <cofactor evidence="1">
        <name>Mn(2+)</name>
        <dbReference type="ChEBI" id="CHEBI:29035"/>
    </cofactor>
    <text evidence="1">Divalent metal cations. Prefers magnesium or manganese.</text>
</comment>
<comment type="subunit">
    <text evidence="1">Homotetramer.</text>
</comment>
<comment type="similarity">
    <text evidence="1">Belongs to the malic enzymes family.</text>
</comment>